<organism>
    <name type="scientific">Arabidopsis thaliana</name>
    <name type="common">Mouse-ear cress</name>
    <dbReference type="NCBI Taxonomy" id="3702"/>
    <lineage>
        <taxon>Eukaryota</taxon>
        <taxon>Viridiplantae</taxon>
        <taxon>Streptophyta</taxon>
        <taxon>Embryophyta</taxon>
        <taxon>Tracheophyta</taxon>
        <taxon>Spermatophyta</taxon>
        <taxon>Magnoliopsida</taxon>
        <taxon>eudicotyledons</taxon>
        <taxon>Gunneridae</taxon>
        <taxon>Pentapetalae</taxon>
        <taxon>rosids</taxon>
        <taxon>malvids</taxon>
        <taxon>Brassicales</taxon>
        <taxon>Brassicaceae</taxon>
        <taxon>Camelineae</taxon>
        <taxon>Arabidopsis</taxon>
    </lineage>
</organism>
<proteinExistence type="inferred from homology"/>
<name>M2K8_ARATH</name>
<evidence type="ECO:0000250" key="1"/>
<evidence type="ECO:0000250" key="2">
    <source>
        <dbReference type="UniProtKB" id="O80396"/>
    </source>
</evidence>
<evidence type="ECO:0000250" key="3">
    <source>
        <dbReference type="UniProtKB" id="O80397"/>
    </source>
</evidence>
<evidence type="ECO:0000255" key="4">
    <source>
        <dbReference type="PROSITE-ProRule" id="PRU00159"/>
    </source>
</evidence>
<evidence type="ECO:0000305" key="5"/>
<reference key="1">
    <citation type="journal article" date="2000" name="Nature">
        <title>Sequence and analysis of chromosome 3 of the plant Arabidopsis thaliana.</title>
        <authorList>
            <person name="Salanoubat M."/>
            <person name="Lemcke K."/>
            <person name="Rieger M."/>
            <person name="Ansorge W."/>
            <person name="Unseld M."/>
            <person name="Fartmann B."/>
            <person name="Valle G."/>
            <person name="Bloecker H."/>
            <person name="Perez-Alonso M."/>
            <person name="Obermaier B."/>
            <person name="Delseny M."/>
            <person name="Boutry M."/>
            <person name="Grivell L.A."/>
            <person name="Mache R."/>
            <person name="Puigdomenech P."/>
            <person name="De Simone V."/>
            <person name="Choisne N."/>
            <person name="Artiguenave F."/>
            <person name="Robert C."/>
            <person name="Brottier P."/>
            <person name="Wincker P."/>
            <person name="Cattolico L."/>
            <person name="Weissenbach J."/>
            <person name="Saurin W."/>
            <person name="Quetier F."/>
            <person name="Schaefer M."/>
            <person name="Mueller-Auer S."/>
            <person name="Gabel C."/>
            <person name="Fuchs M."/>
            <person name="Benes V."/>
            <person name="Wurmbach E."/>
            <person name="Drzonek H."/>
            <person name="Erfle H."/>
            <person name="Jordan N."/>
            <person name="Bangert S."/>
            <person name="Wiedelmann R."/>
            <person name="Kranz H."/>
            <person name="Voss H."/>
            <person name="Holland R."/>
            <person name="Brandt P."/>
            <person name="Nyakatura G."/>
            <person name="Vezzi A."/>
            <person name="D'Angelo M."/>
            <person name="Pallavicini A."/>
            <person name="Toppo S."/>
            <person name="Simionati B."/>
            <person name="Conrad A."/>
            <person name="Hornischer K."/>
            <person name="Kauer G."/>
            <person name="Loehnert T.-H."/>
            <person name="Nordsiek G."/>
            <person name="Reichelt J."/>
            <person name="Scharfe M."/>
            <person name="Schoen O."/>
            <person name="Bargues M."/>
            <person name="Terol J."/>
            <person name="Climent J."/>
            <person name="Navarro P."/>
            <person name="Collado C."/>
            <person name="Perez-Perez A."/>
            <person name="Ottenwaelder B."/>
            <person name="Duchemin D."/>
            <person name="Cooke R."/>
            <person name="Laudie M."/>
            <person name="Berger-Llauro C."/>
            <person name="Purnelle B."/>
            <person name="Masuy D."/>
            <person name="de Haan M."/>
            <person name="Maarse A.C."/>
            <person name="Alcaraz J.-P."/>
            <person name="Cottet A."/>
            <person name="Casacuberta E."/>
            <person name="Monfort A."/>
            <person name="Argiriou A."/>
            <person name="Flores M."/>
            <person name="Liguori R."/>
            <person name="Vitale D."/>
            <person name="Mannhaupt G."/>
            <person name="Haase D."/>
            <person name="Schoof H."/>
            <person name="Rudd S."/>
            <person name="Zaccaria P."/>
            <person name="Mewes H.-W."/>
            <person name="Mayer K.F.X."/>
            <person name="Kaul S."/>
            <person name="Town C.D."/>
            <person name="Koo H.L."/>
            <person name="Tallon L.J."/>
            <person name="Jenkins J."/>
            <person name="Rooney T."/>
            <person name="Rizzo M."/>
            <person name="Walts A."/>
            <person name="Utterback T."/>
            <person name="Fujii C.Y."/>
            <person name="Shea T.P."/>
            <person name="Creasy T.H."/>
            <person name="Haas B."/>
            <person name="Maiti R."/>
            <person name="Wu D."/>
            <person name="Peterson J."/>
            <person name="Van Aken S."/>
            <person name="Pai G."/>
            <person name="Militscher J."/>
            <person name="Sellers P."/>
            <person name="Gill J.E."/>
            <person name="Feldblyum T.V."/>
            <person name="Preuss D."/>
            <person name="Lin X."/>
            <person name="Nierman W.C."/>
            <person name="Salzberg S.L."/>
            <person name="White O."/>
            <person name="Venter J.C."/>
            <person name="Fraser C.M."/>
            <person name="Kaneko T."/>
            <person name="Nakamura Y."/>
            <person name="Sato S."/>
            <person name="Kato T."/>
            <person name="Asamizu E."/>
            <person name="Sasamoto S."/>
            <person name="Kimura T."/>
            <person name="Idesawa K."/>
            <person name="Kawashima K."/>
            <person name="Kishida Y."/>
            <person name="Kiyokawa C."/>
            <person name="Kohara M."/>
            <person name="Matsumoto M."/>
            <person name="Matsuno A."/>
            <person name="Muraki A."/>
            <person name="Nakayama S."/>
            <person name="Nakazaki N."/>
            <person name="Shinpo S."/>
            <person name="Takeuchi C."/>
            <person name="Wada T."/>
            <person name="Watanabe A."/>
            <person name="Yamada M."/>
            <person name="Yasuda M."/>
            <person name="Tabata S."/>
        </authorList>
    </citation>
    <scope>NUCLEOTIDE SEQUENCE [LARGE SCALE GENOMIC DNA]</scope>
    <source>
        <strain>cv. Columbia</strain>
    </source>
</reference>
<reference key="2">
    <citation type="journal article" date="2017" name="Plant J.">
        <title>Araport11: a complete reannotation of the Arabidopsis thaliana reference genome.</title>
        <authorList>
            <person name="Cheng C.Y."/>
            <person name="Krishnakumar V."/>
            <person name="Chan A.P."/>
            <person name="Thibaud-Nissen F."/>
            <person name="Schobel S."/>
            <person name="Town C.D."/>
        </authorList>
    </citation>
    <scope>GENOME REANNOTATION</scope>
    <source>
        <strain>cv. Columbia</strain>
    </source>
</reference>
<reference key="3">
    <citation type="journal article" date="2002" name="Trends Plant Sci.">
        <title>Mitogen-activated protein kinase cascades in plants: a new nomenclature.</title>
        <authorList>
            <consortium name="MAPK group"/>
        </authorList>
    </citation>
    <scope>GENE FAMILY</scope>
    <scope>NOMENCLATURE</scope>
</reference>
<reference key="4">
    <citation type="journal article" date="2006" name="Trends Plant Sci.">
        <title>Ancient signals: comparative genomics of plant MAPK and MAPKK gene families.</title>
        <authorList>
            <person name="Hamel L.P."/>
            <person name="Nicole M.C."/>
            <person name="Sritubtim S."/>
            <person name="Morency M.J."/>
            <person name="Ellis M."/>
            <person name="Ehlting J."/>
            <person name="Beaudoin N."/>
            <person name="Barbazuk B."/>
            <person name="Klessig D."/>
            <person name="Lee J."/>
            <person name="Martin G."/>
            <person name="Mundy J."/>
            <person name="Ohashi Y."/>
            <person name="Scheel D."/>
            <person name="Sheen J."/>
            <person name="Xing T."/>
            <person name="Zhang S."/>
            <person name="Seguin A."/>
            <person name="Ellis B.E."/>
        </authorList>
    </citation>
    <scope>GENE FAMILY</scope>
</reference>
<accession>Q9M8J5</accession>
<protein>
    <recommendedName>
        <fullName>Mitogen-activated protein kinase kinase 8</fullName>
        <shortName>AtMKK8</shortName>
        <shortName>MAP kinase kinase 8</shortName>
        <ecNumber>2.7.12.2</ecNumber>
    </recommendedName>
</protein>
<comment type="catalytic activity">
    <reaction>
        <text>L-seryl-[protein] + ATP = O-phospho-L-seryl-[protein] + ADP + H(+)</text>
        <dbReference type="Rhea" id="RHEA:17989"/>
        <dbReference type="Rhea" id="RHEA-COMP:9863"/>
        <dbReference type="Rhea" id="RHEA-COMP:11604"/>
        <dbReference type="ChEBI" id="CHEBI:15378"/>
        <dbReference type="ChEBI" id="CHEBI:29999"/>
        <dbReference type="ChEBI" id="CHEBI:30616"/>
        <dbReference type="ChEBI" id="CHEBI:83421"/>
        <dbReference type="ChEBI" id="CHEBI:456216"/>
        <dbReference type="EC" id="2.7.12.2"/>
    </reaction>
</comment>
<comment type="catalytic activity">
    <reaction>
        <text>L-threonyl-[protein] + ATP = O-phospho-L-threonyl-[protein] + ADP + H(+)</text>
        <dbReference type="Rhea" id="RHEA:46608"/>
        <dbReference type="Rhea" id="RHEA-COMP:11060"/>
        <dbReference type="Rhea" id="RHEA-COMP:11605"/>
        <dbReference type="ChEBI" id="CHEBI:15378"/>
        <dbReference type="ChEBI" id="CHEBI:30013"/>
        <dbReference type="ChEBI" id="CHEBI:30616"/>
        <dbReference type="ChEBI" id="CHEBI:61977"/>
        <dbReference type="ChEBI" id="CHEBI:456216"/>
        <dbReference type="EC" id="2.7.12.2"/>
    </reaction>
</comment>
<comment type="catalytic activity">
    <reaction>
        <text>L-tyrosyl-[protein] + ATP = O-phospho-L-tyrosyl-[protein] + ADP + H(+)</text>
        <dbReference type="Rhea" id="RHEA:10596"/>
        <dbReference type="Rhea" id="RHEA-COMP:10136"/>
        <dbReference type="Rhea" id="RHEA-COMP:20101"/>
        <dbReference type="ChEBI" id="CHEBI:15378"/>
        <dbReference type="ChEBI" id="CHEBI:30616"/>
        <dbReference type="ChEBI" id="CHEBI:46858"/>
        <dbReference type="ChEBI" id="CHEBI:61978"/>
        <dbReference type="ChEBI" id="CHEBI:456216"/>
        <dbReference type="EC" id="2.7.12.2"/>
    </reaction>
</comment>
<comment type="PTM">
    <text evidence="1">Phosphorylation at Ser-195 and Ser-201 by MAP kinase kinase kinases positively regulates kinase activity.</text>
</comment>
<comment type="similarity">
    <text evidence="5">Belongs to the protein kinase superfamily. STE Ser/Thr protein kinase family. MAP kinase kinase subfamily.</text>
</comment>
<comment type="sequence caution" evidence="5">
    <conflict type="erroneous termination">
        <sequence resource="EMBL-CDS" id="AAF30316"/>
    </conflict>
    <text>Truncated C-terminus.</text>
</comment>
<comment type="sequence caution" evidence="5">
    <conflict type="erroneous termination">
        <sequence resource="EMBL-CDS" id="AEE74363"/>
    </conflict>
    <text>Truncated C-terminus.</text>
</comment>
<keyword id="KW-0067">ATP-binding</keyword>
<keyword id="KW-0418">Kinase</keyword>
<keyword id="KW-0547">Nucleotide-binding</keyword>
<keyword id="KW-0597">Phosphoprotein</keyword>
<keyword id="KW-1185">Reference proteome</keyword>
<keyword id="KW-0723">Serine/threonine-protein kinase</keyword>
<keyword id="KW-0808">Transferase</keyword>
<gene>
    <name type="primary">MKK8</name>
    <name type="ordered locus">At3g06230</name>
    <name type="ORF">F28L1.17</name>
</gene>
<feature type="chain" id="PRO_0000428624" description="Mitogen-activated protein kinase kinase 8">
    <location>
        <begin position="1"/>
        <end position="309"/>
    </location>
</feature>
<feature type="domain" description="Protein kinase" evidence="4">
    <location>
        <begin position="53"/>
        <end position="305"/>
    </location>
</feature>
<feature type="active site" description="Proton acceptor" evidence="4">
    <location>
        <position position="167"/>
    </location>
</feature>
<feature type="binding site" evidence="4">
    <location>
        <begin position="59"/>
        <end position="67"/>
    </location>
    <ligand>
        <name>ATP</name>
        <dbReference type="ChEBI" id="CHEBI:30616"/>
    </ligand>
</feature>
<feature type="binding site" evidence="4">
    <location>
        <position position="82"/>
    </location>
    <ligand>
        <name>ATP</name>
        <dbReference type="ChEBI" id="CHEBI:30616"/>
    </ligand>
</feature>
<feature type="modified residue" description="Phosphoserine" evidence="2">
    <location>
        <position position="195"/>
    </location>
</feature>
<feature type="modified residue" description="Phosphoserine" evidence="3">
    <location>
        <position position="201"/>
    </location>
</feature>
<feature type="modified residue" description="Phosphothreonine" evidence="3">
    <location>
        <position position="205"/>
    </location>
</feature>
<dbReference type="EC" id="2.7.12.2"/>
<dbReference type="EMBL" id="AC018907">
    <property type="protein sequence ID" value="AAF30316.1"/>
    <property type="status" value="ALT_TERM"/>
    <property type="molecule type" value="Genomic_DNA"/>
</dbReference>
<dbReference type="EMBL" id="CP002686">
    <property type="protein sequence ID" value="AEE74363.1"/>
    <property type="status" value="ALT_TERM"/>
    <property type="molecule type" value="Genomic_DNA"/>
</dbReference>
<dbReference type="RefSeq" id="NP_187274.1">
    <property type="nucleotide sequence ID" value="NM_111498.1"/>
</dbReference>
<dbReference type="SMR" id="Q9M8J5"/>
<dbReference type="FunCoup" id="Q9M8J5">
    <property type="interactions" value="14"/>
</dbReference>
<dbReference type="STRING" id="3702.Q9M8J5"/>
<dbReference type="PaxDb" id="3702-AT3G06230.1"/>
<dbReference type="GeneID" id="819797"/>
<dbReference type="KEGG" id="ath:AT3G06230"/>
<dbReference type="Araport" id="AT3G06230"/>
<dbReference type="TAIR" id="AT3G06230"/>
<dbReference type="eggNOG" id="KOG0581">
    <property type="taxonomic scope" value="Eukaryota"/>
</dbReference>
<dbReference type="HOGENOM" id="CLU_000288_63_23_1"/>
<dbReference type="InParanoid" id="Q9M8J5"/>
<dbReference type="PRO" id="PR:Q9M8J5"/>
<dbReference type="Proteomes" id="UP000006548">
    <property type="component" value="Chromosome 3"/>
</dbReference>
<dbReference type="ExpressionAtlas" id="Q9M8J5">
    <property type="expression patterns" value="differential"/>
</dbReference>
<dbReference type="GO" id="GO:0005737">
    <property type="term" value="C:cytoplasm"/>
    <property type="evidence" value="ECO:0000318"/>
    <property type="project" value="GO_Central"/>
</dbReference>
<dbReference type="GO" id="GO:0005524">
    <property type="term" value="F:ATP binding"/>
    <property type="evidence" value="ECO:0007669"/>
    <property type="project" value="UniProtKB-KW"/>
</dbReference>
<dbReference type="GO" id="GO:0004708">
    <property type="term" value="F:MAP kinase kinase activity"/>
    <property type="evidence" value="ECO:0000304"/>
    <property type="project" value="TAIR"/>
</dbReference>
<dbReference type="GO" id="GO:0106310">
    <property type="term" value="F:protein serine kinase activity"/>
    <property type="evidence" value="ECO:0007669"/>
    <property type="project" value="RHEA"/>
</dbReference>
<dbReference type="GO" id="GO:0004674">
    <property type="term" value="F:protein serine/threonine kinase activity"/>
    <property type="evidence" value="ECO:0000318"/>
    <property type="project" value="GO_Central"/>
</dbReference>
<dbReference type="GO" id="GO:0004713">
    <property type="term" value="F:protein tyrosine kinase activity"/>
    <property type="evidence" value="ECO:0007669"/>
    <property type="project" value="RHEA"/>
</dbReference>
<dbReference type="CDD" id="cd06623">
    <property type="entry name" value="PKc_MAPKK_plant_like"/>
    <property type="match status" value="1"/>
</dbReference>
<dbReference type="FunFam" id="3.30.200.20:FF:000716">
    <property type="entry name" value="Mitogen-activated protein kinase kinase 1"/>
    <property type="match status" value="1"/>
</dbReference>
<dbReference type="Gene3D" id="3.30.200.20">
    <property type="entry name" value="Phosphorylase Kinase, domain 1"/>
    <property type="match status" value="1"/>
</dbReference>
<dbReference type="Gene3D" id="1.10.510.10">
    <property type="entry name" value="Transferase(Phosphotransferase) domain 1"/>
    <property type="match status" value="1"/>
</dbReference>
<dbReference type="InterPro" id="IPR011009">
    <property type="entry name" value="Kinase-like_dom_sf"/>
</dbReference>
<dbReference type="InterPro" id="IPR000719">
    <property type="entry name" value="Prot_kinase_dom"/>
</dbReference>
<dbReference type="InterPro" id="IPR017441">
    <property type="entry name" value="Protein_kinase_ATP_BS"/>
</dbReference>
<dbReference type="InterPro" id="IPR053235">
    <property type="entry name" value="Ser_Thr_kinase"/>
</dbReference>
<dbReference type="PANTHER" id="PTHR24361">
    <property type="entry name" value="MITOGEN-ACTIVATED KINASE KINASE KINASE"/>
    <property type="match status" value="1"/>
</dbReference>
<dbReference type="PANTHER" id="PTHR24361:SF714">
    <property type="entry name" value="MITOGEN-ACTIVATED PROTEIN KINASE KINASE 8"/>
    <property type="match status" value="1"/>
</dbReference>
<dbReference type="Pfam" id="PF00069">
    <property type="entry name" value="Pkinase"/>
    <property type="match status" value="1"/>
</dbReference>
<dbReference type="SMART" id="SM00220">
    <property type="entry name" value="S_TKc"/>
    <property type="match status" value="1"/>
</dbReference>
<dbReference type="SUPFAM" id="SSF56112">
    <property type="entry name" value="Protein kinase-like (PK-like)"/>
    <property type="match status" value="1"/>
</dbReference>
<dbReference type="PROSITE" id="PS00107">
    <property type="entry name" value="PROTEIN_KINASE_ATP"/>
    <property type="match status" value="1"/>
</dbReference>
<dbReference type="PROSITE" id="PS50011">
    <property type="entry name" value="PROTEIN_KINASE_DOM"/>
    <property type="match status" value="1"/>
</dbReference>
<sequence length="309" mass="34423">MVMVRDNQFLNLKLSPIQAPTTIPPCRFPIIPATKVSATVSSCASNTFSVANLDRISVLGSGNGGTVFKVKDKTTSEIYALKKVKENWDSTSLREIEILRMVNSPYVAKCHDIFQNPSGEVSILMDYMDLGSLESLRGVTEKQLALMSRQVLEGKNYLHEHKIVHRDIKPANLLRSSKEEVKIADFGVSKIVVRSLNKCNSFVGTFAYMSPERLDSEADGVTEEDKSNVYAGDIWSFGLTMLEILVGYYPMLPDQAAIVCAVCFGEPPKAPEECSDDLKSFMDCCLRKKASERWTASQLLNHPFLLHQD</sequence>